<evidence type="ECO:0000255" key="1">
    <source>
        <dbReference type="HAMAP-Rule" id="MF_01100"/>
    </source>
</evidence>
<evidence type="ECO:0000255" key="2">
    <source>
        <dbReference type="PROSITE-ProRule" id="PRU01175"/>
    </source>
</evidence>
<protein>
    <recommendedName>
        <fullName evidence="1">5'-deoxynucleotidase ECA3034</fullName>
        <ecNumber evidence="1">3.1.3.89</ecNumber>
    </recommendedName>
    <alternativeName>
        <fullName evidence="1">5'-deoxyribonucleotidase</fullName>
    </alternativeName>
    <alternativeName>
        <fullName evidence="1">Nucleoside 5'-monophosphate phosphohydrolase</fullName>
    </alternativeName>
</protein>
<comment type="function">
    <text evidence="1">Catalyzes the strictly specific dephosphorylation of 2'-deoxyribonucleoside 5'-monophosphates.</text>
</comment>
<comment type="catalytic activity">
    <reaction evidence="1">
        <text>a 2'-deoxyribonucleoside 5'-phosphate + H2O = a 2'-deoxyribonucleoside + phosphate</text>
        <dbReference type="Rhea" id="RHEA:36167"/>
        <dbReference type="ChEBI" id="CHEBI:15377"/>
        <dbReference type="ChEBI" id="CHEBI:18274"/>
        <dbReference type="ChEBI" id="CHEBI:43474"/>
        <dbReference type="ChEBI" id="CHEBI:65317"/>
        <dbReference type="EC" id="3.1.3.89"/>
    </reaction>
</comment>
<comment type="cofactor">
    <cofactor evidence="1">
        <name>a divalent metal cation</name>
        <dbReference type="ChEBI" id="CHEBI:60240"/>
    </cofactor>
</comment>
<comment type="subunit">
    <text evidence="1">Homodimer.</text>
</comment>
<comment type="subcellular location">
    <subcellularLocation>
        <location evidence="1">Cytoplasm</location>
    </subcellularLocation>
</comment>
<comment type="similarity">
    <text evidence="1">Belongs to the 5DNU family.</text>
</comment>
<dbReference type="EC" id="3.1.3.89" evidence="1"/>
<dbReference type="EMBL" id="BX950851">
    <property type="protein sequence ID" value="CAG75933.1"/>
    <property type="molecule type" value="Genomic_DNA"/>
</dbReference>
<dbReference type="RefSeq" id="WP_011094559.1">
    <property type="nucleotide sequence ID" value="NC_004547.2"/>
</dbReference>
<dbReference type="SMR" id="Q6D2R1"/>
<dbReference type="STRING" id="218491.ECA3034"/>
<dbReference type="KEGG" id="eca:ECA3034"/>
<dbReference type="PATRIC" id="fig|218491.5.peg.3065"/>
<dbReference type="eggNOG" id="COG1896">
    <property type="taxonomic scope" value="Bacteria"/>
</dbReference>
<dbReference type="HOGENOM" id="CLU_084784_0_0_6"/>
<dbReference type="OrthoDB" id="9812744at2"/>
<dbReference type="Proteomes" id="UP000007966">
    <property type="component" value="Chromosome"/>
</dbReference>
<dbReference type="GO" id="GO:0005737">
    <property type="term" value="C:cytoplasm"/>
    <property type="evidence" value="ECO:0007669"/>
    <property type="project" value="UniProtKB-SubCell"/>
</dbReference>
<dbReference type="GO" id="GO:0002953">
    <property type="term" value="F:5'-deoxynucleotidase activity"/>
    <property type="evidence" value="ECO:0007669"/>
    <property type="project" value="UniProtKB-EC"/>
</dbReference>
<dbReference type="GO" id="GO:0046872">
    <property type="term" value="F:metal ion binding"/>
    <property type="evidence" value="ECO:0007669"/>
    <property type="project" value="UniProtKB-KW"/>
</dbReference>
<dbReference type="GO" id="GO:0000166">
    <property type="term" value="F:nucleotide binding"/>
    <property type="evidence" value="ECO:0007669"/>
    <property type="project" value="UniProtKB-KW"/>
</dbReference>
<dbReference type="FunFam" id="1.10.3210.10:FF:000002">
    <property type="entry name" value="Nucleotidase YfbR"/>
    <property type="match status" value="1"/>
</dbReference>
<dbReference type="Gene3D" id="1.10.3210.10">
    <property type="entry name" value="Hypothetical protein af1432"/>
    <property type="match status" value="1"/>
</dbReference>
<dbReference type="HAMAP" id="MF_01100">
    <property type="entry name" value="5DNU"/>
    <property type="match status" value="1"/>
</dbReference>
<dbReference type="InterPro" id="IPR003607">
    <property type="entry name" value="HD/PDEase_dom"/>
</dbReference>
<dbReference type="InterPro" id="IPR006674">
    <property type="entry name" value="HD_domain"/>
</dbReference>
<dbReference type="InterPro" id="IPR022971">
    <property type="entry name" value="YfbR"/>
</dbReference>
<dbReference type="InterPro" id="IPR039356">
    <property type="entry name" value="YfbR/HDDC2"/>
</dbReference>
<dbReference type="NCBIfam" id="NF003009">
    <property type="entry name" value="PRK03826.1"/>
    <property type="match status" value="1"/>
</dbReference>
<dbReference type="PANTHER" id="PTHR11845">
    <property type="entry name" value="5'-DEOXYNUCLEOTIDASE HDDC2"/>
    <property type="match status" value="1"/>
</dbReference>
<dbReference type="PANTHER" id="PTHR11845:SF13">
    <property type="entry name" value="5'-DEOXYNUCLEOTIDASE HDDC2"/>
    <property type="match status" value="1"/>
</dbReference>
<dbReference type="Pfam" id="PF12917">
    <property type="entry name" value="YfbR-like"/>
    <property type="match status" value="1"/>
</dbReference>
<dbReference type="SMART" id="SM00471">
    <property type="entry name" value="HDc"/>
    <property type="match status" value="1"/>
</dbReference>
<dbReference type="SUPFAM" id="SSF109604">
    <property type="entry name" value="HD-domain/PDEase-like"/>
    <property type="match status" value="1"/>
</dbReference>
<dbReference type="PROSITE" id="PS51831">
    <property type="entry name" value="HD"/>
    <property type="match status" value="1"/>
</dbReference>
<feature type="chain" id="PRO_0000095052" description="5'-deoxynucleotidase ECA3034">
    <location>
        <begin position="1"/>
        <end position="199"/>
    </location>
</feature>
<feature type="domain" description="HD" evidence="2">
    <location>
        <begin position="30"/>
        <end position="142"/>
    </location>
</feature>
<feature type="binding site" evidence="1">
    <location>
        <begin position="18"/>
        <end position="19"/>
    </location>
    <ligand>
        <name>substrate</name>
    </ligand>
</feature>
<feature type="binding site" evidence="1">
    <location>
        <position position="33"/>
    </location>
    <ligand>
        <name>a divalent metal cation</name>
        <dbReference type="ChEBI" id="CHEBI:60240"/>
    </ligand>
</feature>
<feature type="binding site" evidence="1">
    <location>
        <position position="33"/>
    </location>
    <ligand>
        <name>substrate</name>
    </ligand>
</feature>
<feature type="binding site" evidence="1">
    <location>
        <position position="68"/>
    </location>
    <ligand>
        <name>a divalent metal cation</name>
        <dbReference type="ChEBI" id="CHEBI:60240"/>
    </ligand>
</feature>
<feature type="binding site" evidence="1">
    <location>
        <position position="69"/>
    </location>
    <ligand>
        <name>a divalent metal cation</name>
        <dbReference type="ChEBI" id="CHEBI:60240"/>
    </ligand>
</feature>
<feature type="binding site" evidence="1">
    <location>
        <position position="69"/>
    </location>
    <ligand>
        <name>substrate</name>
    </ligand>
</feature>
<feature type="binding site" evidence="1">
    <location>
        <begin position="77"/>
        <end position="80"/>
    </location>
    <ligand>
        <name>substrate</name>
    </ligand>
</feature>
<feature type="binding site" evidence="1">
    <location>
        <position position="137"/>
    </location>
    <ligand>
        <name>a divalent metal cation</name>
        <dbReference type="ChEBI" id="CHEBI:60240"/>
    </ligand>
</feature>
<feature type="binding site" evidence="1">
    <location>
        <position position="137"/>
    </location>
    <ligand>
        <name>substrate</name>
    </ligand>
</feature>
<feature type="site" description="Appears to be important in orienting the phosphate for catalysis" evidence="1">
    <location>
        <position position="18"/>
    </location>
</feature>
<gene>
    <name type="ordered locus">ECA3034</name>
</gene>
<organism>
    <name type="scientific">Pectobacterium atrosepticum (strain SCRI 1043 / ATCC BAA-672)</name>
    <name type="common">Erwinia carotovora subsp. atroseptica</name>
    <dbReference type="NCBI Taxonomy" id="218491"/>
    <lineage>
        <taxon>Bacteria</taxon>
        <taxon>Pseudomonadati</taxon>
        <taxon>Pseudomonadota</taxon>
        <taxon>Gammaproteobacteria</taxon>
        <taxon>Enterobacterales</taxon>
        <taxon>Pectobacteriaceae</taxon>
        <taxon>Pectobacterium</taxon>
    </lineage>
</organism>
<accession>Q6D2R1</accession>
<keyword id="KW-0963">Cytoplasm</keyword>
<keyword id="KW-0378">Hydrolase</keyword>
<keyword id="KW-0479">Metal-binding</keyword>
<keyword id="KW-0547">Nucleotide-binding</keyword>
<keyword id="KW-1185">Reference proteome</keyword>
<reference key="1">
    <citation type="journal article" date="2004" name="Proc. Natl. Acad. Sci. U.S.A.">
        <title>Genome sequence of the enterobacterial phytopathogen Erwinia carotovora subsp. atroseptica and characterization of virulence factors.</title>
        <authorList>
            <person name="Bell K.S."/>
            <person name="Sebaihia M."/>
            <person name="Pritchard L."/>
            <person name="Holden M.T.G."/>
            <person name="Hyman L.J."/>
            <person name="Holeva M.C."/>
            <person name="Thomson N.R."/>
            <person name="Bentley S.D."/>
            <person name="Churcher L.J.C."/>
            <person name="Mungall K."/>
            <person name="Atkin R."/>
            <person name="Bason N."/>
            <person name="Brooks K."/>
            <person name="Chillingworth T."/>
            <person name="Clark K."/>
            <person name="Doggett J."/>
            <person name="Fraser A."/>
            <person name="Hance Z."/>
            <person name="Hauser H."/>
            <person name="Jagels K."/>
            <person name="Moule S."/>
            <person name="Norbertczak H."/>
            <person name="Ormond D."/>
            <person name="Price C."/>
            <person name="Quail M.A."/>
            <person name="Sanders M."/>
            <person name="Walker D."/>
            <person name="Whitehead S."/>
            <person name="Salmond G.P.C."/>
            <person name="Birch P.R.J."/>
            <person name="Parkhill J."/>
            <person name="Toth I.K."/>
        </authorList>
    </citation>
    <scope>NUCLEOTIDE SEQUENCE [LARGE SCALE GENOMIC DNA]</scope>
    <source>
        <strain>SCRI 1043 / ATCC BAA-672</strain>
    </source>
</reference>
<name>5DNU_PECAS</name>
<sequence length="199" mass="22958">MNQSHFFAHLSRLKLISRWPLMRNVRTENVSEHSLQVAFVAHALAVIKNRKFEGNLNTERIALLAMYHDASEVLTGDMPTPIKYYNAQIAHEYKKIEKIAQQKLIEMLPEELQQDYRMLLDDSYTSEEERAIVKQADALCAYLKCLEELSAGNAEFTLAKARLEKTLQLRHSSEMDYFMTVFVPSFSLSLDEISQDSPL</sequence>
<proteinExistence type="inferred from homology"/>